<dbReference type="EMBL" id="CP000851">
    <property type="protein sequence ID" value="ABV86789.1"/>
    <property type="molecule type" value="Genomic_DNA"/>
</dbReference>
<dbReference type="RefSeq" id="WP_012154715.1">
    <property type="nucleotide sequence ID" value="NC_009901.1"/>
</dbReference>
<dbReference type="SMR" id="A8H2K2"/>
<dbReference type="STRING" id="398579.Spea_1464"/>
<dbReference type="KEGG" id="spl:Spea_1464"/>
<dbReference type="eggNOG" id="COG3633">
    <property type="taxonomic scope" value="Bacteria"/>
</dbReference>
<dbReference type="HOGENOM" id="CLU_044581_0_0_6"/>
<dbReference type="OrthoDB" id="9768885at2"/>
<dbReference type="Proteomes" id="UP000002608">
    <property type="component" value="Chromosome"/>
</dbReference>
<dbReference type="GO" id="GO:0005886">
    <property type="term" value="C:plasma membrane"/>
    <property type="evidence" value="ECO:0007669"/>
    <property type="project" value="UniProtKB-SubCell"/>
</dbReference>
<dbReference type="GO" id="GO:0005295">
    <property type="term" value="F:neutral L-amino acid:sodium symporter activity"/>
    <property type="evidence" value="ECO:0007669"/>
    <property type="project" value="TreeGrafter"/>
</dbReference>
<dbReference type="GO" id="GO:0032329">
    <property type="term" value="P:serine transport"/>
    <property type="evidence" value="ECO:0007669"/>
    <property type="project" value="InterPro"/>
</dbReference>
<dbReference type="GO" id="GO:0015826">
    <property type="term" value="P:threonine transport"/>
    <property type="evidence" value="ECO:0007669"/>
    <property type="project" value="InterPro"/>
</dbReference>
<dbReference type="FunFam" id="1.10.3860.10:FF:000003">
    <property type="entry name" value="Serine/threonine transporter sstT"/>
    <property type="match status" value="1"/>
</dbReference>
<dbReference type="Gene3D" id="1.10.3860.10">
    <property type="entry name" value="Sodium:dicarboxylate symporter"/>
    <property type="match status" value="1"/>
</dbReference>
<dbReference type="HAMAP" id="MF_01582">
    <property type="entry name" value="Ser_Thr_transp_SstT"/>
    <property type="match status" value="1"/>
</dbReference>
<dbReference type="InterPro" id="IPR001991">
    <property type="entry name" value="Na-dicarboxylate_symporter"/>
</dbReference>
<dbReference type="InterPro" id="IPR036458">
    <property type="entry name" value="Na:dicarbo_symporter_sf"/>
</dbReference>
<dbReference type="InterPro" id="IPR023025">
    <property type="entry name" value="Ser_Thr_transp_SstT"/>
</dbReference>
<dbReference type="NCBIfam" id="NF010151">
    <property type="entry name" value="PRK13628.1"/>
    <property type="match status" value="1"/>
</dbReference>
<dbReference type="PANTHER" id="PTHR42865">
    <property type="entry name" value="PROTON/GLUTAMATE-ASPARTATE SYMPORTER"/>
    <property type="match status" value="1"/>
</dbReference>
<dbReference type="PANTHER" id="PTHR42865:SF8">
    <property type="entry name" value="SERINE_THREONINE TRANSPORTER SSTT"/>
    <property type="match status" value="1"/>
</dbReference>
<dbReference type="Pfam" id="PF00375">
    <property type="entry name" value="SDF"/>
    <property type="match status" value="1"/>
</dbReference>
<dbReference type="PRINTS" id="PR00173">
    <property type="entry name" value="EDTRNSPORT"/>
</dbReference>
<dbReference type="SUPFAM" id="SSF118215">
    <property type="entry name" value="Proton glutamate symport protein"/>
    <property type="match status" value="1"/>
</dbReference>
<gene>
    <name evidence="1" type="primary">sstT</name>
    <name type="ordered locus">Spea_1464</name>
</gene>
<accession>A8H2K2</accession>
<proteinExistence type="inferred from homology"/>
<evidence type="ECO:0000255" key="1">
    <source>
        <dbReference type="HAMAP-Rule" id="MF_01582"/>
    </source>
</evidence>
<name>SSTT_SHEPA</name>
<protein>
    <recommendedName>
        <fullName evidence="1">Serine/threonine transporter SstT</fullName>
    </recommendedName>
    <alternativeName>
        <fullName evidence="1">Na(+)/serine-threonine symporter</fullName>
    </alternativeName>
</protein>
<keyword id="KW-0029">Amino-acid transport</keyword>
<keyword id="KW-0997">Cell inner membrane</keyword>
<keyword id="KW-1003">Cell membrane</keyword>
<keyword id="KW-0472">Membrane</keyword>
<keyword id="KW-1185">Reference proteome</keyword>
<keyword id="KW-0769">Symport</keyword>
<keyword id="KW-0812">Transmembrane</keyword>
<keyword id="KW-1133">Transmembrane helix</keyword>
<keyword id="KW-0813">Transport</keyword>
<comment type="function">
    <text evidence="1">Involved in the import of serine and threonine into the cell, with the concomitant import of sodium (symport system).</text>
</comment>
<comment type="catalytic activity">
    <reaction evidence="1">
        <text>L-serine(in) + Na(+)(in) = L-serine(out) + Na(+)(out)</text>
        <dbReference type="Rhea" id="RHEA:29575"/>
        <dbReference type="ChEBI" id="CHEBI:29101"/>
        <dbReference type="ChEBI" id="CHEBI:33384"/>
    </reaction>
    <physiologicalReaction direction="right-to-left" evidence="1">
        <dbReference type="Rhea" id="RHEA:29577"/>
    </physiologicalReaction>
</comment>
<comment type="catalytic activity">
    <reaction evidence="1">
        <text>L-threonine(in) + Na(+)(in) = L-threonine(out) + Na(+)(out)</text>
        <dbReference type="Rhea" id="RHEA:69999"/>
        <dbReference type="ChEBI" id="CHEBI:29101"/>
        <dbReference type="ChEBI" id="CHEBI:57926"/>
    </reaction>
    <physiologicalReaction direction="right-to-left" evidence="1">
        <dbReference type="Rhea" id="RHEA:70001"/>
    </physiologicalReaction>
</comment>
<comment type="subcellular location">
    <subcellularLocation>
        <location evidence="1">Cell inner membrane</location>
        <topology evidence="1">Multi-pass membrane protein</topology>
    </subcellularLocation>
</comment>
<comment type="similarity">
    <text evidence="1">Belongs to the dicarboxylate/amino acid:cation symporter (DAACS) (TC 2.A.23) family.</text>
</comment>
<sequence length="407" mass="42090">MNQKPSLFARLADGSLVLQILVGIIAGVILATVSKSGAESVAFLGQLFVGALKAIAPILVFILVAASIANQKKNAKTNMRPIVILYLFGTFSAAVTAVLMSFAFPTTLALTLDAAQASPPEGIGEVIHTLLFQLVDNPVNAVITGNYIGILAWGVGLGLALHHATDSTKLVFADVSHGVSQMVRFIIRLAPIGIFGLVSSTFATTGFSAIAGYMHLLLVLLGAMAIMALIINPAIVFFKIRRNPYPLVFTCLRESGVTAFFTRSSAANIPVNMALCEKLKLHEDTYSVSIPLGATINMGGAAITITILTLAAANSMGIQVDILTAILLSVVAGVSACGASGVAGGSLLLIPLACSLFGISNDVAMQVVAVGFIIGVIQDSAETGLNSSTDVIFTAAACEAAERKENA</sequence>
<reference key="1">
    <citation type="submission" date="2007-10" db="EMBL/GenBank/DDBJ databases">
        <title>Complete sequence of Shewanella pealeana ATCC 700345.</title>
        <authorList>
            <consortium name="US DOE Joint Genome Institute"/>
            <person name="Copeland A."/>
            <person name="Lucas S."/>
            <person name="Lapidus A."/>
            <person name="Barry K."/>
            <person name="Glavina del Rio T."/>
            <person name="Dalin E."/>
            <person name="Tice H."/>
            <person name="Pitluck S."/>
            <person name="Chertkov O."/>
            <person name="Brettin T."/>
            <person name="Bruce D."/>
            <person name="Detter J.C."/>
            <person name="Han C."/>
            <person name="Schmutz J."/>
            <person name="Larimer F."/>
            <person name="Land M."/>
            <person name="Hauser L."/>
            <person name="Kyrpides N."/>
            <person name="Kim E."/>
            <person name="Zhao J.-S.Z."/>
            <person name="Manno D."/>
            <person name="Hawari J."/>
            <person name="Richardson P."/>
        </authorList>
    </citation>
    <scope>NUCLEOTIDE SEQUENCE [LARGE SCALE GENOMIC DNA]</scope>
    <source>
        <strain>ATCC 700345 / ANG-SQ1</strain>
    </source>
</reference>
<feature type="chain" id="PRO_1000087940" description="Serine/threonine transporter SstT">
    <location>
        <begin position="1"/>
        <end position="407"/>
    </location>
</feature>
<feature type="transmembrane region" description="Helical" evidence="1">
    <location>
        <begin position="14"/>
        <end position="34"/>
    </location>
</feature>
<feature type="transmembrane region" description="Helical" evidence="1">
    <location>
        <begin position="48"/>
        <end position="68"/>
    </location>
</feature>
<feature type="transmembrane region" description="Helical" evidence="1">
    <location>
        <begin position="82"/>
        <end position="102"/>
    </location>
</feature>
<feature type="transmembrane region" description="Helical" evidence="1">
    <location>
        <begin position="141"/>
        <end position="161"/>
    </location>
</feature>
<feature type="transmembrane region" description="Helical" evidence="1">
    <location>
        <begin position="192"/>
        <end position="212"/>
    </location>
</feature>
<feature type="transmembrane region" description="Helical" evidence="1">
    <location>
        <begin position="218"/>
        <end position="238"/>
    </location>
</feature>
<feature type="transmembrane region" description="Helical" evidence="1">
    <location>
        <begin position="290"/>
        <end position="310"/>
    </location>
</feature>
<feature type="transmembrane region" description="Helical" evidence="1">
    <location>
        <begin position="316"/>
        <end position="336"/>
    </location>
</feature>
<feature type="transmembrane region" description="Helical" evidence="1">
    <location>
        <begin position="363"/>
        <end position="383"/>
    </location>
</feature>
<organism>
    <name type="scientific">Shewanella pealeana (strain ATCC 700345 / ANG-SQ1)</name>
    <dbReference type="NCBI Taxonomy" id="398579"/>
    <lineage>
        <taxon>Bacteria</taxon>
        <taxon>Pseudomonadati</taxon>
        <taxon>Pseudomonadota</taxon>
        <taxon>Gammaproteobacteria</taxon>
        <taxon>Alteromonadales</taxon>
        <taxon>Shewanellaceae</taxon>
        <taxon>Shewanella</taxon>
    </lineage>
</organism>